<dbReference type="EC" id="6.3.2.8" evidence="1"/>
<dbReference type="EMBL" id="CP000076">
    <property type="protein sequence ID" value="AAY94288.1"/>
    <property type="molecule type" value="Genomic_DNA"/>
</dbReference>
<dbReference type="RefSeq" id="WP_011063309.1">
    <property type="nucleotide sequence ID" value="NC_004129.6"/>
</dbReference>
<dbReference type="SMR" id="Q4K6J4"/>
<dbReference type="STRING" id="220664.PFL_5060"/>
<dbReference type="GeneID" id="57478032"/>
<dbReference type="KEGG" id="pfl:PFL_5060"/>
<dbReference type="PATRIC" id="fig|220664.5.peg.5178"/>
<dbReference type="eggNOG" id="COG0773">
    <property type="taxonomic scope" value="Bacteria"/>
</dbReference>
<dbReference type="HOGENOM" id="CLU_028104_2_2_6"/>
<dbReference type="UniPathway" id="UPA00219"/>
<dbReference type="Proteomes" id="UP000008540">
    <property type="component" value="Chromosome"/>
</dbReference>
<dbReference type="GO" id="GO:0005737">
    <property type="term" value="C:cytoplasm"/>
    <property type="evidence" value="ECO:0007669"/>
    <property type="project" value="UniProtKB-SubCell"/>
</dbReference>
<dbReference type="GO" id="GO:0005524">
    <property type="term" value="F:ATP binding"/>
    <property type="evidence" value="ECO:0007669"/>
    <property type="project" value="UniProtKB-UniRule"/>
</dbReference>
<dbReference type="GO" id="GO:0008763">
    <property type="term" value="F:UDP-N-acetylmuramate-L-alanine ligase activity"/>
    <property type="evidence" value="ECO:0007669"/>
    <property type="project" value="UniProtKB-UniRule"/>
</dbReference>
<dbReference type="GO" id="GO:0051301">
    <property type="term" value="P:cell division"/>
    <property type="evidence" value="ECO:0007669"/>
    <property type="project" value="UniProtKB-KW"/>
</dbReference>
<dbReference type="GO" id="GO:0071555">
    <property type="term" value="P:cell wall organization"/>
    <property type="evidence" value="ECO:0007669"/>
    <property type="project" value="UniProtKB-KW"/>
</dbReference>
<dbReference type="GO" id="GO:0009252">
    <property type="term" value="P:peptidoglycan biosynthetic process"/>
    <property type="evidence" value="ECO:0007669"/>
    <property type="project" value="UniProtKB-UniRule"/>
</dbReference>
<dbReference type="GO" id="GO:0008360">
    <property type="term" value="P:regulation of cell shape"/>
    <property type="evidence" value="ECO:0007669"/>
    <property type="project" value="UniProtKB-KW"/>
</dbReference>
<dbReference type="FunFam" id="3.40.1190.10:FF:000001">
    <property type="entry name" value="UDP-N-acetylmuramate--L-alanine ligase"/>
    <property type="match status" value="1"/>
</dbReference>
<dbReference type="FunFam" id="3.40.50.720:FF:000046">
    <property type="entry name" value="UDP-N-acetylmuramate--L-alanine ligase"/>
    <property type="match status" value="1"/>
</dbReference>
<dbReference type="Gene3D" id="3.90.190.20">
    <property type="entry name" value="Mur ligase, C-terminal domain"/>
    <property type="match status" value="1"/>
</dbReference>
<dbReference type="Gene3D" id="3.40.1190.10">
    <property type="entry name" value="Mur-like, catalytic domain"/>
    <property type="match status" value="1"/>
</dbReference>
<dbReference type="Gene3D" id="3.40.50.720">
    <property type="entry name" value="NAD(P)-binding Rossmann-like Domain"/>
    <property type="match status" value="1"/>
</dbReference>
<dbReference type="HAMAP" id="MF_00046">
    <property type="entry name" value="MurC"/>
    <property type="match status" value="1"/>
</dbReference>
<dbReference type="InterPro" id="IPR036565">
    <property type="entry name" value="Mur-like_cat_sf"/>
</dbReference>
<dbReference type="InterPro" id="IPR004101">
    <property type="entry name" value="Mur_ligase_C"/>
</dbReference>
<dbReference type="InterPro" id="IPR036615">
    <property type="entry name" value="Mur_ligase_C_dom_sf"/>
</dbReference>
<dbReference type="InterPro" id="IPR013221">
    <property type="entry name" value="Mur_ligase_cen"/>
</dbReference>
<dbReference type="InterPro" id="IPR000713">
    <property type="entry name" value="Mur_ligase_N"/>
</dbReference>
<dbReference type="InterPro" id="IPR050061">
    <property type="entry name" value="MurCDEF_pg_biosynth"/>
</dbReference>
<dbReference type="InterPro" id="IPR005758">
    <property type="entry name" value="UDP-N-AcMur_Ala_ligase_MurC"/>
</dbReference>
<dbReference type="NCBIfam" id="TIGR01082">
    <property type="entry name" value="murC"/>
    <property type="match status" value="1"/>
</dbReference>
<dbReference type="PANTHER" id="PTHR43445:SF3">
    <property type="entry name" value="UDP-N-ACETYLMURAMATE--L-ALANINE LIGASE"/>
    <property type="match status" value="1"/>
</dbReference>
<dbReference type="PANTHER" id="PTHR43445">
    <property type="entry name" value="UDP-N-ACETYLMURAMATE--L-ALANINE LIGASE-RELATED"/>
    <property type="match status" value="1"/>
</dbReference>
<dbReference type="Pfam" id="PF01225">
    <property type="entry name" value="Mur_ligase"/>
    <property type="match status" value="1"/>
</dbReference>
<dbReference type="Pfam" id="PF02875">
    <property type="entry name" value="Mur_ligase_C"/>
    <property type="match status" value="1"/>
</dbReference>
<dbReference type="Pfam" id="PF08245">
    <property type="entry name" value="Mur_ligase_M"/>
    <property type="match status" value="1"/>
</dbReference>
<dbReference type="SUPFAM" id="SSF51984">
    <property type="entry name" value="MurCD N-terminal domain"/>
    <property type="match status" value="1"/>
</dbReference>
<dbReference type="SUPFAM" id="SSF53623">
    <property type="entry name" value="MurD-like peptide ligases, catalytic domain"/>
    <property type="match status" value="1"/>
</dbReference>
<dbReference type="SUPFAM" id="SSF53244">
    <property type="entry name" value="MurD-like peptide ligases, peptide-binding domain"/>
    <property type="match status" value="1"/>
</dbReference>
<accession>Q4K6J4</accession>
<gene>
    <name evidence="1" type="primary">murC</name>
    <name type="ordered locus">PFL_5060</name>
</gene>
<protein>
    <recommendedName>
        <fullName evidence="1">UDP-N-acetylmuramate--L-alanine ligase</fullName>
        <ecNumber evidence="1">6.3.2.8</ecNumber>
    </recommendedName>
    <alternativeName>
        <fullName evidence="1">UDP-N-acetylmuramoyl-L-alanine synthetase</fullName>
    </alternativeName>
</protein>
<comment type="function">
    <text evidence="1">Cell wall formation.</text>
</comment>
<comment type="catalytic activity">
    <reaction evidence="1">
        <text>UDP-N-acetyl-alpha-D-muramate + L-alanine + ATP = UDP-N-acetyl-alpha-D-muramoyl-L-alanine + ADP + phosphate + H(+)</text>
        <dbReference type="Rhea" id="RHEA:23372"/>
        <dbReference type="ChEBI" id="CHEBI:15378"/>
        <dbReference type="ChEBI" id="CHEBI:30616"/>
        <dbReference type="ChEBI" id="CHEBI:43474"/>
        <dbReference type="ChEBI" id="CHEBI:57972"/>
        <dbReference type="ChEBI" id="CHEBI:70757"/>
        <dbReference type="ChEBI" id="CHEBI:83898"/>
        <dbReference type="ChEBI" id="CHEBI:456216"/>
        <dbReference type="EC" id="6.3.2.8"/>
    </reaction>
</comment>
<comment type="pathway">
    <text evidence="1">Cell wall biogenesis; peptidoglycan biosynthesis.</text>
</comment>
<comment type="subcellular location">
    <subcellularLocation>
        <location evidence="1">Cytoplasm</location>
    </subcellularLocation>
</comment>
<comment type="similarity">
    <text evidence="1">Belongs to the MurCDEF family.</text>
</comment>
<sequence length="484" mass="52285">MVENQKAMPQPEMRRIRRIHFVGIGGVGMCGIAEVLLNLGYQVSGSDLKASPVTERLESFGAQIFIGHRAENAANADVLVVSSAVNTSNPEVATALERRIPVVPRAEMLAELMRYRHGVAVAGTHGKTTTTSLLASVFAAGGLDPTFVIGGRLNAAGTNAQLGTSRYLIAEADESDASFLHLQPLVAVVTNIDADHMATYDGDFNKLKKTFVDFLHNLPFYGLAVMCLDDPVVREILPQVKRPTVTYGFSEEADVRAINVRQQGMQTFFTVLRRDREPLDVSVNMPGNHNVLNSLATICIATDEGISDEAIVQGLSGFQGVGRRFQVYGELPVEGGNVMLVDDYGHHPTEVAAVIKAVRGGWPERRLVMVYQPHRFSRTRDLYDDFVQVLADANVLLLMEVYPAGEEPIPGADSRQLCHSIRQRGQLDPIYIERGVDLAPLVKPLLRAGDILLCQGAGDIGGLAPKLLGSPLFAGAVAAGKGAK</sequence>
<keyword id="KW-0067">ATP-binding</keyword>
<keyword id="KW-0131">Cell cycle</keyword>
<keyword id="KW-0132">Cell division</keyword>
<keyword id="KW-0133">Cell shape</keyword>
<keyword id="KW-0961">Cell wall biogenesis/degradation</keyword>
<keyword id="KW-0963">Cytoplasm</keyword>
<keyword id="KW-0436">Ligase</keyword>
<keyword id="KW-0547">Nucleotide-binding</keyword>
<keyword id="KW-0573">Peptidoglycan synthesis</keyword>
<organism>
    <name type="scientific">Pseudomonas fluorescens (strain ATCC BAA-477 / NRRL B-23932 / Pf-5)</name>
    <dbReference type="NCBI Taxonomy" id="220664"/>
    <lineage>
        <taxon>Bacteria</taxon>
        <taxon>Pseudomonadati</taxon>
        <taxon>Pseudomonadota</taxon>
        <taxon>Gammaproteobacteria</taxon>
        <taxon>Pseudomonadales</taxon>
        <taxon>Pseudomonadaceae</taxon>
        <taxon>Pseudomonas</taxon>
    </lineage>
</organism>
<evidence type="ECO:0000255" key="1">
    <source>
        <dbReference type="HAMAP-Rule" id="MF_00046"/>
    </source>
</evidence>
<feature type="chain" id="PRO_0000242576" description="UDP-N-acetylmuramate--L-alanine ligase">
    <location>
        <begin position="1"/>
        <end position="484"/>
    </location>
</feature>
<feature type="binding site" evidence="1">
    <location>
        <begin position="123"/>
        <end position="129"/>
    </location>
    <ligand>
        <name>ATP</name>
        <dbReference type="ChEBI" id="CHEBI:30616"/>
    </ligand>
</feature>
<reference key="1">
    <citation type="journal article" date="2005" name="Nat. Biotechnol.">
        <title>Complete genome sequence of the plant commensal Pseudomonas fluorescens Pf-5.</title>
        <authorList>
            <person name="Paulsen I.T."/>
            <person name="Press C.M."/>
            <person name="Ravel J."/>
            <person name="Kobayashi D.Y."/>
            <person name="Myers G.S.A."/>
            <person name="Mavrodi D.V."/>
            <person name="DeBoy R.T."/>
            <person name="Seshadri R."/>
            <person name="Ren Q."/>
            <person name="Madupu R."/>
            <person name="Dodson R.J."/>
            <person name="Durkin A.S."/>
            <person name="Brinkac L.M."/>
            <person name="Daugherty S.C."/>
            <person name="Sullivan S.A."/>
            <person name="Rosovitz M.J."/>
            <person name="Gwinn M.L."/>
            <person name="Zhou L."/>
            <person name="Schneider D.J."/>
            <person name="Cartinhour S.W."/>
            <person name="Nelson W.C."/>
            <person name="Weidman J."/>
            <person name="Watkins K."/>
            <person name="Tran K."/>
            <person name="Khouri H."/>
            <person name="Pierson E.A."/>
            <person name="Pierson L.S. III"/>
            <person name="Thomashow L.S."/>
            <person name="Loper J.E."/>
        </authorList>
    </citation>
    <scope>NUCLEOTIDE SEQUENCE [LARGE SCALE GENOMIC DNA]</scope>
    <source>
        <strain>ATCC BAA-477 / NRRL B-23932 / Pf-5</strain>
    </source>
</reference>
<proteinExistence type="inferred from homology"/>
<name>MURC_PSEF5</name>